<protein>
    <recommendedName>
        <fullName>Pentatricopeptide repeat-containing protein At1g03560, mitochondrial</fullName>
    </recommendedName>
</protein>
<dbReference type="EMBL" id="AC002560">
    <property type="protein sequence ID" value="AAF86531.1"/>
    <property type="molecule type" value="Genomic_DNA"/>
</dbReference>
<dbReference type="EMBL" id="CP002684">
    <property type="protein sequence ID" value="AEE27586.1"/>
    <property type="molecule type" value="Genomic_DNA"/>
</dbReference>
<dbReference type="EMBL" id="AK229132">
    <property type="protein sequence ID" value="BAF01006.1"/>
    <property type="molecule type" value="mRNA"/>
</dbReference>
<dbReference type="PIR" id="T00902">
    <property type="entry name" value="T00902"/>
</dbReference>
<dbReference type="RefSeq" id="NP_171855.1">
    <property type="nucleotide sequence ID" value="NM_100238.4"/>
</dbReference>
<dbReference type="SMR" id="Q9LR67"/>
<dbReference type="FunCoup" id="Q9LR67">
    <property type="interactions" value="1673"/>
</dbReference>
<dbReference type="GlyGen" id="Q9LR67">
    <property type="glycosylation" value="1 site"/>
</dbReference>
<dbReference type="iPTMnet" id="Q9LR67"/>
<dbReference type="PaxDb" id="3702-AT1G03560.1"/>
<dbReference type="EnsemblPlants" id="AT1G03560.1">
    <property type="protein sequence ID" value="AT1G03560.1"/>
    <property type="gene ID" value="AT1G03560"/>
</dbReference>
<dbReference type="GeneID" id="839458"/>
<dbReference type="Gramene" id="AT1G03560.1">
    <property type="protein sequence ID" value="AT1G03560.1"/>
    <property type="gene ID" value="AT1G03560"/>
</dbReference>
<dbReference type="KEGG" id="ath:AT1G03560"/>
<dbReference type="Araport" id="AT1G03560"/>
<dbReference type="TAIR" id="AT1G03560"/>
<dbReference type="eggNOG" id="KOG4197">
    <property type="taxonomic scope" value="Eukaryota"/>
</dbReference>
<dbReference type="HOGENOM" id="CLU_002706_49_0_1"/>
<dbReference type="InParanoid" id="Q9LR67"/>
<dbReference type="OMA" id="HNLECYV"/>
<dbReference type="PhylomeDB" id="Q9LR67"/>
<dbReference type="PRO" id="PR:Q9LR67"/>
<dbReference type="Proteomes" id="UP000006548">
    <property type="component" value="Chromosome 1"/>
</dbReference>
<dbReference type="ExpressionAtlas" id="Q9LR67">
    <property type="expression patterns" value="baseline and differential"/>
</dbReference>
<dbReference type="GO" id="GO:0005739">
    <property type="term" value="C:mitochondrion"/>
    <property type="evidence" value="ECO:0007669"/>
    <property type="project" value="UniProtKB-SubCell"/>
</dbReference>
<dbReference type="Gene3D" id="1.25.40.10">
    <property type="entry name" value="Tetratricopeptide repeat domain"/>
    <property type="match status" value="6"/>
</dbReference>
<dbReference type="InterPro" id="IPR051240">
    <property type="entry name" value="Mito_RNA-Proc/Resp"/>
</dbReference>
<dbReference type="InterPro" id="IPR002885">
    <property type="entry name" value="Pentatricopeptide_rpt"/>
</dbReference>
<dbReference type="InterPro" id="IPR011990">
    <property type="entry name" value="TPR-like_helical_dom_sf"/>
</dbReference>
<dbReference type="NCBIfam" id="TIGR00756">
    <property type="entry name" value="PPR"/>
    <property type="match status" value="10"/>
</dbReference>
<dbReference type="PANTHER" id="PTHR47933:SF37">
    <property type="entry name" value="OS07G0590600 PROTEIN"/>
    <property type="match status" value="1"/>
</dbReference>
<dbReference type="PANTHER" id="PTHR47933">
    <property type="entry name" value="PENTATRICOPEPTIDE REPEAT-CONTAINING PROTEIN 1, MITOCHONDRIAL"/>
    <property type="match status" value="1"/>
</dbReference>
<dbReference type="Pfam" id="PF01535">
    <property type="entry name" value="PPR"/>
    <property type="match status" value="2"/>
</dbReference>
<dbReference type="Pfam" id="PF12854">
    <property type="entry name" value="PPR_1"/>
    <property type="match status" value="1"/>
</dbReference>
<dbReference type="Pfam" id="PF13041">
    <property type="entry name" value="PPR_2"/>
    <property type="match status" value="4"/>
</dbReference>
<dbReference type="SUPFAM" id="SSF48452">
    <property type="entry name" value="TPR-like"/>
    <property type="match status" value="1"/>
</dbReference>
<dbReference type="PROSITE" id="PS51375">
    <property type="entry name" value="PPR"/>
    <property type="match status" value="14"/>
</dbReference>
<comment type="subcellular location">
    <subcellularLocation>
        <location evidence="2">Mitochondrion</location>
    </subcellularLocation>
</comment>
<comment type="similarity">
    <text evidence="2">Belongs to the PPR family. P subfamily.</text>
</comment>
<comment type="online information" name="Pentatricopeptide repeat proteins">
    <link uri="https://ppr.plantenergy.uwa.edu.au"/>
</comment>
<proteinExistence type="evidence at transcript level"/>
<name>PPR9_ARATH</name>
<accession>Q9LR67</accession>
<accession>Q0WPE3</accession>
<sequence length="660" mass="74628">MRRFYRKPFSVPLLNRPHCSSQSHCLYKNGDFLSDDSKCSPLSSSRTSVRWVFNSSSLPPPEWIEPFNDVSDLVKSNRNLLPSPWVSQILNLLDGSASMESNLDGFCRKFLIKLSPNFVSFVLKSDEIREKPDIAWSFFCWSRKQKKYTHNLECYVSLVDVLALAKDVDRIRFVSSEIKKFEFPMTVSAANALIKSFGKLGMVEELLWVWRKMKENGIEPTLYTYNFLMNGLVSAMFVDSAERVFEVMESGRIKPDIVTYNTMIKGYCKAGQTQKAMEKLRDMETRGHEADKITYMTMIQACYADSDFGSCVALYQEMDEKGIQVPPHAFSLVIGGLCKEGKLNEGYTVFENMIRKGSKPNVAIYTVLIDGYAKSGSVEDAIRLLHRMIDEGFKPDVVTYSVVVNGLCKNGRVEEALDYFHTCRFDGLAINSMFYSSLIDGLGKAGRVDEAERLFEEMSEKGCTRDSYCYNALIDAFTKHRKVDEAIALFKRMEEEEGCDQTVYTYTILLSGMFKEHRNEEALKLWDMMIDKGITPTAACFRALSTGLCLSGKVARACKILDELAPMGVILDAACEDMINTLCKAGRIKEACKLADGITERGREVPGRIRTVMINALRKVGKADLAMKLMHSKIGIGYERMGSVKRRVKFTTLLETCFDS</sequence>
<feature type="transit peptide" description="Mitochondrion" evidence="1">
    <location>
        <begin position="1"/>
        <end position="12"/>
    </location>
</feature>
<feature type="chain" id="PRO_0000342750" description="Pentatricopeptide repeat-containing protein At1g03560, mitochondrial">
    <location>
        <begin position="13"/>
        <end position="660"/>
    </location>
</feature>
<feature type="repeat" description="PPR 1">
    <location>
        <begin position="151"/>
        <end position="185"/>
    </location>
</feature>
<feature type="repeat" description="PPR 2">
    <location>
        <begin position="186"/>
        <end position="220"/>
    </location>
</feature>
<feature type="repeat" description="PPR 3">
    <location>
        <begin position="221"/>
        <end position="255"/>
    </location>
</feature>
<feature type="repeat" description="PPR 4">
    <location>
        <begin position="256"/>
        <end position="290"/>
    </location>
</feature>
<feature type="repeat" description="PPR 5">
    <location>
        <begin position="291"/>
        <end position="325"/>
    </location>
</feature>
<feature type="repeat" description="PPR 6">
    <location>
        <begin position="326"/>
        <end position="360"/>
    </location>
</feature>
<feature type="repeat" description="PPR 7">
    <location>
        <begin position="361"/>
        <end position="395"/>
    </location>
</feature>
<feature type="repeat" description="PPR 8">
    <location>
        <begin position="396"/>
        <end position="430"/>
    </location>
</feature>
<feature type="repeat" description="PPR 9">
    <location>
        <begin position="431"/>
        <end position="465"/>
    </location>
</feature>
<feature type="repeat" description="PPR 10">
    <location>
        <begin position="466"/>
        <end position="496"/>
    </location>
</feature>
<feature type="repeat" description="PPR 11">
    <location>
        <begin position="502"/>
        <end position="536"/>
    </location>
</feature>
<feature type="repeat" description="PPR 12">
    <location>
        <begin position="537"/>
        <end position="571"/>
    </location>
</feature>
<feature type="repeat" description="PPR 13">
    <location>
        <begin position="574"/>
        <end position="605"/>
    </location>
</feature>
<feature type="repeat" description="PPR 14">
    <location>
        <begin position="606"/>
        <end position="640"/>
    </location>
</feature>
<feature type="sequence conflict" description="In Ref. 3; BAF01006." evidence="2" ref="3">
    <original>C</original>
    <variation>G</variation>
    <location>
        <position position="19"/>
    </location>
</feature>
<keyword id="KW-0496">Mitochondrion</keyword>
<keyword id="KW-1185">Reference proteome</keyword>
<keyword id="KW-0677">Repeat</keyword>
<keyword id="KW-0809">Transit peptide</keyword>
<evidence type="ECO:0000255" key="1"/>
<evidence type="ECO:0000305" key="2"/>
<gene>
    <name type="ordered locus">At1g03560</name>
    <name type="ORF">F21B7.18</name>
</gene>
<organism>
    <name type="scientific">Arabidopsis thaliana</name>
    <name type="common">Mouse-ear cress</name>
    <dbReference type="NCBI Taxonomy" id="3702"/>
    <lineage>
        <taxon>Eukaryota</taxon>
        <taxon>Viridiplantae</taxon>
        <taxon>Streptophyta</taxon>
        <taxon>Embryophyta</taxon>
        <taxon>Tracheophyta</taxon>
        <taxon>Spermatophyta</taxon>
        <taxon>Magnoliopsida</taxon>
        <taxon>eudicotyledons</taxon>
        <taxon>Gunneridae</taxon>
        <taxon>Pentapetalae</taxon>
        <taxon>rosids</taxon>
        <taxon>malvids</taxon>
        <taxon>Brassicales</taxon>
        <taxon>Brassicaceae</taxon>
        <taxon>Camelineae</taxon>
        <taxon>Arabidopsis</taxon>
    </lineage>
</organism>
<reference key="1">
    <citation type="journal article" date="2000" name="Nature">
        <title>Sequence and analysis of chromosome 1 of the plant Arabidopsis thaliana.</title>
        <authorList>
            <person name="Theologis A."/>
            <person name="Ecker J.R."/>
            <person name="Palm C.J."/>
            <person name="Federspiel N.A."/>
            <person name="Kaul S."/>
            <person name="White O."/>
            <person name="Alonso J."/>
            <person name="Altafi H."/>
            <person name="Araujo R."/>
            <person name="Bowman C.L."/>
            <person name="Brooks S.Y."/>
            <person name="Buehler E."/>
            <person name="Chan A."/>
            <person name="Chao Q."/>
            <person name="Chen H."/>
            <person name="Cheuk R.F."/>
            <person name="Chin C.W."/>
            <person name="Chung M.K."/>
            <person name="Conn L."/>
            <person name="Conway A.B."/>
            <person name="Conway A.R."/>
            <person name="Creasy T.H."/>
            <person name="Dewar K."/>
            <person name="Dunn P."/>
            <person name="Etgu P."/>
            <person name="Feldblyum T.V."/>
            <person name="Feng J.-D."/>
            <person name="Fong B."/>
            <person name="Fujii C.Y."/>
            <person name="Gill J.E."/>
            <person name="Goldsmith A.D."/>
            <person name="Haas B."/>
            <person name="Hansen N.F."/>
            <person name="Hughes B."/>
            <person name="Huizar L."/>
            <person name="Hunter J.L."/>
            <person name="Jenkins J."/>
            <person name="Johnson-Hopson C."/>
            <person name="Khan S."/>
            <person name="Khaykin E."/>
            <person name="Kim C.J."/>
            <person name="Koo H.L."/>
            <person name="Kremenetskaia I."/>
            <person name="Kurtz D.B."/>
            <person name="Kwan A."/>
            <person name="Lam B."/>
            <person name="Langin-Hooper S."/>
            <person name="Lee A."/>
            <person name="Lee J.M."/>
            <person name="Lenz C.A."/>
            <person name="Li J.H."/>
            <person name="Li Y.-P."/>
            <person name="Lin X."/>
            <person name="Liu S.X."/>
            <person name="Liu Z.A."/>
            <person name="Luros J.S."/>
            <person name="Maiti R."/>
            <person name="Marziali A."/>
            <person name="Militscher J."/>
            <person name="Miranda M."/>
            <person name="Nguyen M."/>
            <person name="Nierman W.C."/>
            <person name="Osborne B.I."/>
            <person name="Pai G."/>
            <person name="Peterson J."/>
            <person name="Pham P.K."/>
            <person name="Rizzo M."/>
            <person name="Rooney T."/>
            <person name="Rowley D."/>
            <person name="Sakano H."/>
            <person name="Salzberg S.L."/>
            <person name="Schwartz J.R."/>
            <person name="Shinn P."/>
            <person name="Southwick A.M."/>
            <person name="Sun H."/>
            <person name="Tallon L.J."/>
            <person name="Tambunga G."/>
            <person name="Toriumi M.J."/>
            <person name="Town C.D."/>
            <person name="Utterback T."/>
            <person name="Van Aken S."/>
            <person name="Vaysberg M."/>
            <person name="Vysotskaia V.S."/>
            <person name="Walker M."/>
            <person name="Wu D."/>
            <person name="Yu G."/>
            <person name="Fraser C.M."/>
            <person name="Venter J.C."/>
            <person name="Davis R.W."/>
        </authorList>
    </citation>
    <scope>NUCLEOTIDE SEQUENCE [LARGE SCALE GENOMIC DNA]</scope>
    <source>
        <strain>cv. Columbia</strain>
    </source>
</reference>
<reference key="2">
    <citation type="journal article" date="2017" name="Plant J.">
        <title>Araport11: a complete reannotation of the Arabidopsis thaliana reference genome.</title>
        <authorList>
            <person name="Cheng C.Y."/>
            <person name="Krishnakumar V."/>
            <person name="Chan A.P."/>
            <person name="Thibaud-Nissen F."/>
            <person name="Schobel S."/>
            <person name="Town C.D."/>
        </authorList>
    </citation>
    <scope>GENOME REANNOTATION</scope>
    <source>
        <strain>cv. Columbia</strain>
    </source>
</reference>
<reference key="3">
    <citation type="submission" date="2006-07" db="EMBL/GenBank/DDBJ databases">
        <title>Large-scale analysis of RIKEN Arabidopsis full-length (RAFL) cDNAs.</title>
        <authorList>
            <person name="Totoki Y."/>
            <person name="Seki M."/>
            <person name="Ishida J."/>
            <person name="Nakajima M."/>
            <person name="Enju A."/>
            <person name="Kamiya A."/>
            <person name="Narusaka M."/>
            <person name="Shin-i T."/>
            <person name="Nakagawa M."/>
            <person name="Sakamoto N."/>
            <person name="Oishi K."/>
            <person name="Kohara Y."/>
            <person name="Kobayashi M."/>
            <person name="Toyoda A."/>
            <person name="Sakaki Y."/>
            <person name="Sakurai T."/>
            <person name="Iida K."/>
            <person name="Akiyama K."/>
            <person name="Satou M."/>
            <person name="Toyoda T."/>
            <person name="Konagaya A."/>
            <person name="Carninci P."/>
            <person name="Kawai J."/>
            <person name="Hayashizaki Y."/>
            <person name="Shinozaki K."/>
        </authorList>
    </citation>
    <scope>NUCLEOTIDE SEQUENCE [LARGE SCALE MRNA] OF 19-660</scope>
    <source>
        <strain>cv. Columbia</strain>
    </source>
</reference>
<reference key="4">
    <citation type="journal article" date="2004" name="Plant Cell">
        <title>Genome-wide analysis of Arabidopsis pentatricopeptide repeat proteins reveals their essential role in organelle biogenesis.</title>
        <authorList>
            <person name="Lurin C."/>
            <person name="Andres C."/>
            <person name="Aubourg S."/>
            <person name="Bellaoui M."/>
            <person name="Bitton F."/>
            <person name="Bruyere C."/>
            <person name="Caboche M."/>
            <person name="Debast C."/>
            <person name="Gualberto J."/>
            <person name="Hoffmann B."/>
            <person name="Lecharny A."/>
            <person name="Le Ret M."/>
            <person name="Martin-Magniette M.-L."/>
            <person name="Mireau H."/>
            <person name="Peeters N."/>
            <person name="Renou J.-P."/>
            <person name="Szurek B."/>
            <person name="Taconnat L."/>
            <person name="Small I."/>
        </authorList>
    </citation>
    <scope>GENE FAMILY</scope>
</reference>